<proteinExistence type="inferred from homology"/>
<evidence type="ECO:0000255" key="1">
    <source>
        <dbReference type="HAMAP-Rule" id="MF_00358"/>
    </source>
</evidence>
<evidence type="ECO:0000305" key="2"/>
<gene>
    <name evidence="1" type="primary">rpsU</name>
    <name type="ordered locus">BCc_036</name>
</gene>
<keyword id="KW-1185">Reference proteome</keyword>
<keyword id="KW-0687">Ribonucleoprotein</keyword>
<keyword id="KW-0689">Ribosomal protein</keyword>
<accession>Q058D2</accession>
<sequence length="71" mass="8608">MPIIKIRDNEPFDVALRRFKRSCEKAGILSEIRRREFYEKPTTERKRAKASAIKRLSKKLARENLKRIRMY</sequence>
<feature type="chain" id="PRO_1000005099" description="Small ribosomal subunit protein bS21">
    <location>
        <begin position="1"/>
        <end position="71"/>
    </location>
</feature>
<name>RS21_BUCCC</name>
<protein>
    <recommendedName>
        <fullName evidence="1">Small ribosomal subunit protein bS21</fullName>
    </recommendedName>
    <alternativeName>
        <fullName evidence="2">30S ribosomal protein S21</fullName>
    </alternativeName>
</protein>
<reference key="1">
    <citation type="journal article" date="2006" name="Science">
        <title>A small microbial genome: the end of a long symbiotic relationship?</title>
        <authorList>
            <person name="Perez-Brocal V."/>
            <person name="Gil R."/>
            <person name="Ramos S."/>
            <person name="Lamelas A."/>
            <person name="Postigo M."/>
            <person name="Michelena J.M."/>
            <person name="Silva F.J."/>
            <person name="Moya A."/>
            <person name="Latorre A."/>
        </authorList>
    </citation>
    <scope>NUCLEOTIDE SEQUENCE [LARGE SCALE GENOMIC DNA]</scope>
    <source>
        <strain>Cc</strain>
    </source>
</reference>
<comment type="similarity">
    <text evidence="1">Belongs to the bacterial ribosomal protein bS21 family.</text>
</comment>
<dbReference type="EMBL" id="CP000263">
    <property type="protein sequence ID" value="ABJ90517.1"/>
    <property type="molecule type" value="Genomic_DNA"/>
</dbReference>
<dbReference type="RefSeq" id="WP_011672436.1">
    <property type="nucleotide sequence ID" value="NC_008513.1"/>
</dbReference>
<dbReference type="SMR" id="Q058D2"/>
<dbReference type="STRING" id="372461.BCc_036"/>
<dbReference type="KEGG" id="bcc:BCc_036"/>
<dbReference type="eggNOG" id="COG0828">
    <property type="taxonomic scope" value="Bacteria"/>
</dbReference>
<dbReference type="HOGENOM" id="CLU_159258_1_0_6"/>
<dbReference type="OrthoDB" id="9799244at2"/>
<dbReference type="Proteomes" id="UP000000669">
    <property type="component" value="Chromosome"/>
</dbReference>
<dbReference type="GO" id="GO:1990904">
    <property type="term" value="C:ribonucleoprotein complex"/>
    <property type="evidence" value="ECO:0007669"/>
    <property type="project" value="UniProtKB-KW"/>
</dbReference>
<dbReference type="GO" id="GO:0005840">
    <property type="term" value="C:ribosome"/>
    <property type="evidence" value="ECO:0007669"/>
    <property type="project" value="UniProtKB-KW"/>
</dbReference>
<dbReference type="GO" id="GO:0003735">
    <property type="term" value="F:structural constituent of ribosome"/>
    <property type="evidence" value="ECO:0007669"/>
    <property type="project" value="InterPro"/>
</dbReference>
<dbReference type="GO" id="GO:0006412">
    <property type="term" value="P:translation"/>
    <property type="evidence" value="ECO:0007669"/>
    <property type="project" value="UniProtKB-UniRule"/>
</dbReference>
<dbReference type="FunFam" id="1.20.5.1150:FF:000001">
    <property type="entry name" value="30S ribosomal protein S21"/>
    <property type="match status" value="1"/>
</dbReference>
<dbReference type="Gene3D" id="1.20.5.1150">
    <property type="entry name" value="Ribosomal protein S8"/>
    <property type="match status" value="1"/>
</dbReference>
<dbReference type="HAMAP" id="MF_00358">
    <property type="entry name" value="Ribosomal_bS21"/>
    <property type="match status" value="1"/>
</dbReference>
<dbReference type="InterPro" id="IPR001911">
    <property type="entry name" value="Ribosomal_bS21"/>
</dbReference>
<dbReference type="InterPro" id="IPR018278">
    <property type="entry name" value="Ribosomal_bS21_CS"/>
</dbReference>
<dbReference type="InterPro" id="IPR038380">
    <property type="entry name" value="Ribosomal_bS21_sf"/>
</dbReference>
<dbReference type="NCBIfam" id="TIGR00030">
    <property type="entry name" value="S21p"/>
    <property type="match status" value="1"/>
</dbReference>
<dbReference type="PANTHER" id="PTHR21109">
    <property type="entry name" value="MITOCHONDRIAL 28S RIBOSOMAL PROTEIN S21"/>
    <property type="match status" value="1"/>
</dbReference>
<dbReference type="PANTHER" id="PTHR21109:SF22">
    <property type="entry name" value="SMALL RIBOSOMAL SUBUNIT PROTEIN BS21"/>
    <property type="match status" value="1"/>
</dbReference>
<dbReference type="Pfam" id="PF01165">
    <property type="entry name" value="Ribosomal_S21"/>
    <property type="match status" value="1"/>
</dbReference>
<dbReference type="PRINTS" id="PR00976">
    <property type="entry name" value="RIBOSOMALS21"/>
</dbReference>
<dbReference type="PROSITE" id="PS01181">
    <property type="entry name" value="RIBOSOMAL_S21"/>
    <property type="match status" value="1"/>
</dbReference>
<organism>
    <name type="scientific">Buchnera aphidicola subsp. Cinara cedri (strain Cc)</name>
    <dbReference type="NCBI Taxonomy" id="372461"/>
    <lineage>
        <taxon>Bacteria</taxon>
        <taxon>Pseudomonadati</taxon>
        <taxon>Pseudomonadota</taxon>
        <taxon>Gammaproteobacteria</taxon>
        <taxon>Enterobacterales</taxon>
        <taxon>Erwiniaceae</taxon>
        <taxon>Buchnera</taxon>
    </lineage>
</organism>